<evidence type="ECO:0000250" key="1"/>
<evidence type="ECO:0000255" key="2"/>
<evidence type="ECO:0000305" key="3"/>
<comment type="function">
    <text evidence="1">Part of the ecpRABCDE operon, which encodes the E.coli common pilus (ECP). ECP is found in both commensal and pathogenic strains and plays a dual role in early-stage biofilm development and host cell recognition. Major subunit of the fimbria (By similarity).</text>
</comment>
<comment type="subunit">
    <text evidence="1">Self-associates. Forms filaments. Interacts with EcpD (By similarity).</text>
</comment>
<comment type="subcellular location">
    <subcellularLocation>
        <location evidence="1">Fimbrium</location>
    </subcellularLocation>
</comment>
<comment type="induction">
    <text evidence="1">Negatively regulated by H-NS. Positively regulated by IHF and EcpR (By similarity).</text>
</comment>
<comment type="similarity">
    <text evidence="3">Belongs to the EcpA/MatB fimbrillin family.</text>
</comment>
<gene>
    <name type="primary">ecpA</name>
    <name type="synonym">matB</name>
</gene>
<feature type="signal peptide" evidence="2">
    <location>
        <begin position="1"/>
        <end position="22"/>
    </location>
</feature>
<feature type="chain" id="PRO_0000367921" description="Common pilus major fimbrillin subunit EcpA">
    <location>
        <begin position="23"/>
        <end position="195"/>
    </location>
</feature>
<reference key="1">
    <citation type="submission" date="2010-11" db="EMBL/GenBank/DDBJ databases">
        <title>Complete genome sequence of adherent invasive Escherichia coli strain LF82 isolated from a patient with Crohn's disease.</title>
        <authorList>
            <person name="Peyretaillade E."/>
            <person name="Claret L."/>
            <person name="Bonnet R."/>
            <person name="Dossat C."/>
            <person name="Barbe V."/>
            <person name="Vacherie B."/>
            <person name="Segurens B."/>
            <person name="Peyret P."/>
            <person name="Darfeuille-Michaud A."/>
        </authorList>
    </citation>
    <scope>NUCLEOTIDE SEQUENCE [LARGE SCALE GENOMIC DNA]</scope>
    <source>
        <strain>LF82 / AIEC</strain>
    </source>
</reference>
<proteinExistence type="inferred from homology"/>
<name>ECPA_ECOLX</name>
<keyword id="KW-0281">Fimbrium</keyword>
<keyword id="KW-0732">Signal</keyword>
<protein>
    <recommendedName>
        <fullName>Common pilus major fimbrillin subunit EcpA</fullName>
    </recommendedName>
    <alternativeName>
        <fullName>MatB fimbrillin</fullName>
    </alternativeName>
</protein>
<organism>
    <name type="scientific">Escherichia coli</name>
    <dbReference type="NCBI Taxonomy" id="562"/>
    <lineage>
        <taxon>Bacteria</taxon>
        <taxon>Pseudomonadati</taxon>
        <taxon>Pseudomonadota</taxon>
        <taxon>Gammaproteobacteria</taxon>
        <taxon>Enterobacterales</taxon>
        <taxon>Enterobacteriaceae</taxon>
        <taxon>Escherichia</taxon>
    </lineage>
</organism>
<dbReference type="EMBL" id="CU651637">
    <property type="protein sequence ID" value="CAP74843.1"/>
    <property type="molecule type" value="Genomic_DNA"/>
</dbReference>
<dbReference type="RefSeq" id="WP_000730982.1">
    <property type="nucleotide sequence ID" value="NZ_WXYW01000001.1"/>
</dbReference>
<dbReference type="SMR" id="P0C8Z9"/>
<dbReference type="STRING" id="585034.ECIAI1_0294"/>
<dbReference type="KEGG" id="elf:LF82_1280"/>
<dbReference type="PATRIC" id="fig|591946.4.peg.282"/>
<dbReference type="eggNOG" id="ENOG502Z9JQ">
    <property type="taxonomic scope" value="Bacteria"/>
</dbReference>
<dbReference type="HOGENOM" id="CLU_120328_0_0_6"/>
<dbReference type="OMA" id="AQDQFTF"/>
<dbReference type="GO" id="GO:0009289">
    <property type="term" value="C:pilus"/>
    <property type="evidence" value="ECO:0007669"/>
    <property type="project" value="UniProtKB-SubCell"/>
</dbReference>
<dbReference type="Gene3D" id="2.60.40.3290">
    <property type="entry name" value="Fimbrial protein EcpA"/>
    <property type="match status" value="1"/>
</dbReference>
<dbReference type="InterPro" id="IPR016514">
    <property type="entry name" value="EcpA"/>
</dbReference>
<dbReference type="InterPro" id="IPR038478">
    <property type="entry name" value="Fimbrillin_EcpA_sf"/>
</dbReference>
<dbReference type="Pfam" id="PF16449">
    <property type="entry name" value="MatB"/>
    <property type="match status" value="1"/>
</dbReference>
<dbReference type="PIRSF" id="PIRSF007320">
    <property type="entry name" value="Fimbrillin_MatB"/>
    <property type="match status" value="1"/>
</dbReference>
<sequence length="195" mass="20081">MKKKVLAIALVTVFTGTGVAQAADVTAQAVATWSATAKKDTTSKLVVTPLGSLAFQYAEGIKGFNSQKGLFDVAIEGDSTATAFKLTSRLITNTLTQLDTSGSTLNVGVDYNGAAVEKTGDTVMIDTANGVLGGNLSPLANGYNASNRTTAQDGFTFSIISGTTNGTTAVTDYSTLPEGIWSGDVSVQFDATWTS</sequence>
<accession>P0C8Z9</accession>
<accession>Q9AME1</accession>